<feature type="chain" id="PRO_0000222844" description="RNA-directed RNA polymerase L">
    <location>
        <begin position="1"/>
        <end position="2109"/>
    </location>
</feature>
<feature type="domain" description="RdRp catalytic" evidence="3">
    <location>
        <begin position="598"/>
        <end position="784"/>
    </location>
</feature>
<feature type="domain" description="Mononegavirus-type SAM-dependent 2'-O-MTase" evidence="4">
    <location>
        <begin position="1640"/>
        <end position="1837"/>
    </location>
</feature>
<feature type="region of interest" description="Capping domain" evidence="16 21">
    <location>
        <begin position="866"/>
        <end position="1334"/>
    </location>
</feature>
<feature type="region of interest" description="PRNTase domain" evidence="22">
    <location>
        <begin position="1081"/>
        <end position="1331"/>
    </location>
</feature>
<feature type="region of interest" description="priming-capping loop" evidence="22">
    <location>
        <begin position="1152"/>
        <end position="1189"/>
    </location>
</feature>
<feature type="region of interest" description="Connector domain" evidence="16 21">
    <location>
        <begin position="1358"/>
        <end position="1557"/>
    </location>
</feature>
<feature type="active site" description="Nucleophile; for GDP polyribonucleotidyltransferase" evidence="18">
    <location>
        <position position="1227"/>
    </location>
</feature>
<feature type="active site" description="For mRNA (nucleoside-2'-O-)-methyltransferase 2" evidence="28">
    <location>
        <position position="1651"/>
    </location>
</feature>
<feature type="active site" description="For mRNA (nucleoside-2'-O-)-methyltransferase 2" evidence="28">
    <location>
        <position position="1762"/>
    </location>
</feature>
<feature type="active site" description="For mRNA (nucleoside-2'-O-)-methyltransferase 2" evidence="28">
    <location>
        <position position="1795"/>
    </location>
</feature>
<feature type="active site" description="For mRNA (nucleoside-2'-O-)-methyltransferase 2" evidence="28">
    <location>
        <position position="1833"/>
    </location>
</feature>
<feature type="binding site" evidence="1">
    <location>
        <position position="605"/>
    </location>
    <ligand>
        <name>Mg(2+)</name>
        <dbReference type="ChEBI" id="CHEBI:18420"/>
        <note>catalytic; for RNA-directed RNA polymerase activity</note>
    </ligand>
</feature>
<feature type="binding site" evidence="1">
    <location>
        <position position="714"/>
    </location>
    <ligand>
        <name>Mg(2+)</name>
        <dbReference type="ChEBI" id="CHEBI:18420"/>
        <note>catalytic; for RNA-directed RNA polymerase activity</note>
    </ligand>
</feature>
<feature type="binding site" evidence="16 21">
    <location>
        <position position="1081"/>
    </location>
    <ligand>
        <name>Zn(2+)</name>
        <dbReference type="ChEBI" id="CHEBI:29105"/>
        <label>1</label>
        <note>structural</note>
    </ligand>
</feature>
<feature type="binding site" evidence="16 21">
    <location>
        <position position="1108"/>
    </location>
    <ligand>
        <name>Zn(2+)</name>
        <dbReference type="ChEBI" id="CHEBI:29105"/>
        <label>1</label>
        <note>structural</note>
    </ligand>
</feature>
<feature type="binding site" evidence="16">
    <location>
        <position position="1120"/>
    </location>
    <ligand>
        <name>Zn(2+)</name>
        <dbReference type="ChEBI" id="CHEBI:29105"/>
        <label>2</label>
        <note>structural</note>
    </ligand>
</feature>
<feature type="binding site" evidence="16">
    <location>
        <position position="1123"/>
    </location>
    <ligand>
        <name>Zn(2+)</name>
        <dbReference type="ChEBI" id="CHEBI:29105"/>
        <label>2</label>
        <note>structural</note>
    </ligand>
</feature>
<feature type="binding site" evidence="16">
    <location>
        <position position="1294"/>
    </location>
    <ligand>
        <name>Zn(2+)</name>
        <dbReference type="ChEBI" id="CHEBI:29105"/>
        <label>2</label>
        <note>structural</note>
    </ligand>
</feature>
<feature type="binding site" evidence="16">
    <location>
        <position position="1296"/>
    </location>
    <ligand>
        <name>Zn(2+)</name>
        <dbReference type="ChEBI" id="CHEBI:29105"/>
        <label>2</label>
        <note>structural</note>
    </ligand>
</feature>
<feature type="binding site" evidence="16 21">
    <location>
        <position position="1299"/>
    </location>
    <ligand>
        <name>Zn(2+)</name>
        <dbReference type="ChEBI" id="CHEBI:29105"/>
        <label>1</label>
        <note>structural</note>
    </ligand>
</feature>
<feature type="binding site" evidence="16 21">
    <location>
        <position position="1302"/>
    </location>
    <ligand>
        <name>Zn(2+)</name>
        <dbReference type="ChEBI" id="CHEBI:29105"/>
        <label>1</label>
        <note>structural</note>
    </ligand>
</feature>
<feature type="binding site" evidence="2">
    <location>
        <begin position="1667"/>
        <end position="1676"/>
    </location>
    <ligand>
        <name>ATP</name>
        <dbReference type="ChEBI" id="CHEBI:30616"/>
    </ligand>
</feature>
<feature type="site" description="Interaction with the phosphoprotein" evidence="21">
    <location>
        <position position="704"/>
    </location>
</feature>
<feature type="site" description="Important for escaping from the 3'-terminal leader promotter followed by the formation of a stable leaderRNA elongation complex" evidence="22">
    <location>
        <position position="1183"/>
    </location>
</feature>
<feature type="site" description="Interaction with the phosphoprotein" evidence="21">
    <location>
        <position position="1419"/>
    </location>
</feature>
<feature type="site" description="Interaction with the phosphoprotein" evidence="21">
    <location>
        <position position="1427"/>
    </location>
</feature>
<feature type="site" description="Interaction with the phosphoprotein" evidence="21">
    <location>
        <position position="1496"/>
    </location>
</feature>
<feature type="site" description="Interaction with the phosphoprotein" evidence="21">
    <location>
        <position position="1911"/>
    </location>
</feature>
<feature type="site" description="Interaction with the phosphoprotein" evidence="21">
    <location>
        <position position="1981"/>
    </location>
</feature>
<feature type="site" description="Interaction with the phosphoprotein" evidence="21">
    <location>
        <position position="2022"/>
    </location>
</feature>
<feature type="site" description="Interaction with the phosphoprotein" evidence="21">
    <location>
        <position position="2097"/>
    </location>
</feature>
<feature type="site" description="Interaction with the phosphoprotein" evidence="21">
    <location>
        <position position="2098"/>
    </location>
</feature>
<feature type="sequence variant">
    <original>P</original>
    <variation>R</variation>
    <location>
        <position position="228"/>
    </location>
</feature>
<feature type="sequence variant">
    <original>H</original>
    <variation>D</variation>
    <location>
        <position position="467"/>
    </location>
</feature>
<feature type="sequence variant">
    <original>FP</original>
    <variation>LR</variation>
    <location>
        <begin position="548"/>
        <end position="549"/>
    </location>
</feature>
<feature type="sequence variant">
    <original>P</original>
    <variation>R</variation>
    <location>
        <position position="670"/>
    </location>
</feature>
<feature type="sequence variant">
    <original>S</original>
    <variation>F</variation>
    <location>
        <position position="910"/>
    </location>
</feature>
<feature type="sequence variant">
    <original>P</original>
    <variation>A</variation>
    <location>
        <position position="1026"/>
    </location>
</feature>
<feature type="sequence variant">
    <original>A</original>
    <variation>G</variation>
    <location>
        <position position="1348"/>
    </location>
</feature>
<feature type="sequence variant">
    <original>P</original>
    <variation>A</variation>
    <location>
        <position position="1589"/>
    </location>
</feature>
<feature type="sequence variant">
    <original>I</original>
    <variation>T</variation>
    <location>
        <position position="2026"/>
    </location>
</feature>
<feature type="mutagenesis site" description="Reduces the capping activity." evidence="22">
    <original>K</original>
    <variation>A</variation>
    <location>
        <position position="1177"/>
    </location>
</feature>
<feature type="mutagenesis site" description="Decreases the efficiency of polyA-coupled termination of mRNA synthesis. Diminution of de novo initiation of leader RNA. No effect on P-L interaction." evidence="22">
    <original>R</original>
    <variation>A</variation>
    <variation>K</variation>
    <location>
        <position position="1178"/>
    </location>
</feature>
<feature type="mutagenesis site" description="Reduces the capping activity. No effect on P-L interaction." evidence="22">
    <original>R</original>
    <variation>A</variation>
    <location>
        <position position="1181"/>
    </location>
</feature>
<feature type="mutagenesis site" description="Drastic reduction of leader RNA synthesis. No effect on capping activity. No effect on P-L interaction." evidence="22">
    <original>R</original>
    <variation>A</variation>
    <variation>K</variation>
    <location>
        <position position="1183"/>
    </location>
</feature>
<feature type="mutagenesis site" description="Complete loss of G-N-7 and 2'-O methylation activity." evidence="5 8 15">
    <original>K</original>
    <variation>A</variation>
    <location>
        <position position="1651"/>
    </location>
</feature>
<feature type="mutagenesis site" description="Complete loss of G-N-7 methylation activity but not 2'-O methylation activity." evidence="15">
    <original>G</original>
    <variation>A</variation>
    <location>
        <position position="1670"/>
    </location>
</feature>
<feature type="mutagenesis site" description="No effect on G-N-7 and 2'-O methylation activity, but sensitive to the substrate concentration." evidence="8 15">
    <original>G</original>
    <variation>A</variation>
    <location>
        <position position="1674"/>
    </location>
</feature>
<feature type="mutagenesis site" description="About 95% loss of G-N-7 and 2'-O methylation activity." evidence="5">
    <original>F</original>
    <variation>A</variation>
    <location>
        <position position="1691"/>
    </location>
</feature>
<feature type="mutagenesis site" description="70%loss of G-N-7 and methylation activity and 2'-O methylation activity." evidence="5 8 15">
    <original>D</original>
    <variation>A</variation>
    <location>
        <position position="1735"/>
    </location>
</feature>
<feature type="mutagenesis site" description="Almost complete loss of G-N-7 and 2'-O methylation activity." evidence="5 8">
    <original>D</original>
    <variation>A</variation>
    <location>
        <position position="1762"/>
    </location>
</feature>
<feature type="mutagenesis site" description="Almost complete loss of G-N-7 and 2'-O methylation activity." evidence="5 8">
    <original>K</original>
    <variation>A</variation>
    <location>
        <position position="1795"/>
    </location>
</feature>
<feature type="mutagenesis site" description="Almost complete loss of G-N-7 and 2'-O methylation activity." evidence="5 8">
    <original>E</original>
    <variation>A</variation>
    <variation>Q</variation>
    <location>
        <position position="1833"/>
    </location>
</feature>
<feature type="strand" evidence="32">
    <location>
        <begin position="47"/>
        <end position="49"/>
    </location>
</feature>
<feature type="helix" evidence="32">
    <location>
        <begin position="50"/>
        <end position="57"/>
    </location>
</feature>
<feature type="helix" evidence="32">
    <location>
        <begin position="64"/>
        <end position="67"/>
    </location>
</feature>
<feature type="helix" evidence="32">
    <location>
        <begin position="72"/>
        <end position="79"/>
    </location>
</feature>
<feature type="turn" evidence="32">
    <location>
        <begin position="80"/>
        <end position="82"/>
    </location>
</feature>
<feature type="turn" evidence="32">
    <location>
        <begin position="87"/>
        <end position="89"/>
    </location>
</feature>
<feature type="helix" evidence="32">
    <location>
        <begin position="91"/>
        <end position="98"/>
    </location>
</feature>
<feature type="helix" evidence="32">
    <location>
        <begin position="107"/>
        <end position="134"/>
    </location>
</feature>
<feature type="helix" evidence="32">
    <location>
        <begin position="144"/>
        <end position="146"/>
    </location>
</feature>
<feature type="helix" evidence="32">
    <location>
        <begin position="148"/>
        <end position="171"/>
    </location>
</feature>
<feature type="helix" evidence="32">
    <location>
        <begin position="176"/>
        <end position="185"/>
    </location>
</feature>
<feature type="strand" evidence="32">
    <location>
        <begin position="188"/>
        <end position="192"/>
    </location>
</feature>
<feature type="strand" evidence="32">
    <location>
        <begin position="194"/>
        <end position="196"/>
    </location>
</feature>
<feature type="strand" evidence="32">
    <location>
        <begin position="198"/>
        <end position="204"/>
    </location>
</feature>
<feature type="turn" evidence="32">
    <location>
        <begin position="205"/>
        <end position="207"/>
    </location>
</feature>
<feature type="strand" evidence="32">
    <location>
        <begin position="208"/>
        <end position="213"/>
    </location>
</feature>
<feature type="strand" evidence="32">
    <location>
        <begin position="216"/>
        <end position="219"/>
    </location>
</feature>
<feature type="turn" evidence="32">
    <location>
        <begin position="220"/>
        <end position="223"/>
    </location>
</feature>
<feature type="strand" evidence="32">
    <location>
        <begin position="224"/>
        <end position="226"/>
    </location>
</feature>
<feature type="helix" evidence="32">
    <location>
        <begin position="228"/>
        <end position="246"/>
    </location>
</feature>
<feature type="helix" evidence="32">
    <location>
        <begin position="258"/>
        <end position="277"/>
    </location>
</feature>
<feature type="helix" evidence="32">
    <location>
        <begin position="280"/>
        <end position="282"/>
    </location>
</feature>
<feature type="helix" evidence="32">
    <location>
        <begin position="283"/>
        <end position="286"/>
    </location>
</feature>
<feature type="helix" evidence="32">
    <location>
        <begin position="289"/>
        <end position="301"/>
    </location>
</feature>
<feature type="strand" evidence="32">
    <location>
        <begin position="303"/>
        <end position="305"/>
    </location>
</feature>
<feature type="helix" evidence="32">
    <location>
        <begin position="312"/>
        <end position="326"/>
    </location>
</feature>
<feature type="helix" evidence="32">
    <location>
        <begin position="331"/>
        <end position="339"/>
    </location>
</feature>
<feature type="helix" evidence="32">
    <location>
        <begin position="345"/>
        <end position="352"/>
    </location>
</feature>
<feature type="turn" evidence="32">
    <location>
        <begin position="353"/>
        <end position="358"/>
    </location>
</feature>
<feature type="helix" evidence="32">
    <location>
        <begin position="365"/>
        <end position="376"/>
    </location>
</feature>
<feature type="helix" evidence="32">
    <location>
        <begin position="384"/>
        <end position="406"/>
    </location>
</feature>
<feature type="turn" evidence="32">
    <location>
        <begin position="413"/>
        <end position="415"/>
    </location>
</feature>
<feature type="helix" evidence="32">
    <location>
        <begin position="424"/>
        <end position="427"/>
    </location>
</feature>
<feature type="helix" evidence="32">
    <location>
        <begin position="434"/>
        <end position="437"/>
    </location>
</feature>
<feature type="helix" evidence="32">
    <location>
        <begin position="438"/>
        <end position="440"/>
    </location>
</feature>
<feature type="helix" evidence="32">
    <location>
        <begin position="444"/>
        <end position="446"/>
    </location>
</feature>
<feature type="strand" evidence="32">
    <location>
        <begin position="460"/>
        <end position="464"/>
    </location>
</feature>
<feature type="helix" evidence="32">
    <location>
        <begin position="474"/>
        <end position="483"/>
    </location>
</feature>
<feature type="helix" evidence="32">
    <location>
        <begin position="494"/>
        <end position="500"/>
    </location>
</feature>
<feature type="helix" evidence="32">
    <location>
        <begin position="506"/>
        <end position="516"/>
    </location>
</feature>
<feature type="strand" evidence="32">
    <location>
        <begin position="520"/>
        <end position="522"/>
    </location>
</feature>
<feature type="strand" evidence="32">
    <location>
        <begin position="524"/>
        <end position="526"/>
    </location>
</feature>
<feature type="helix" evidence="32">
    <location>
        <begin position="546"/>
        <end position="562"/>
    </location>
</feature>
<feature type="helix" evidence="32">
    <location>
        <begin position="564"/>
        <end position="566"/>
    </location>
</feature>
<feature type="helix" evidence="32">
    <location>
        <begin position="576"/>
        <end position="586"/>
    </location>
</feature>
<feature type="turn" evidence="32">
    <location>
        <begin position="587"/>
        <end position="589"/>
    </location>
</feature>
<feature type="strand" evidence="32">
    <location>
        <begin position="595"/>
        <end position="604"/>
    </location>
</feature>
<feature type="turn" evidence="32">
    <location>
        <begin position="607"/>
        <end position="611"/>
    </location>
</feature>
<feature type="helix" evidence="32">
    <location>
        <begin position="615"/>
        <end position="628"/>
    </location>
</feature>
<feature type="strand" evidence="32">
    <location>
        <begin position="632"/>
        <end position="635"/>
    </location>
</feature>
<feature type="helix" evidence="32">
    <location>
        <begin position="638"/>
        <end position="642"/>
    </location>
</feature>
<feature type="strand" evidence="32">
    <location>
        <begin position="645"/>
        <end position="648"/>
    </location>
</feature>
<feature type="strand" evidence="32">
    <location>
        <begin position="655"/>
        <end position="658"/>
    </location>
</feature>
<feature type="strand" evidence="32">
    <location>
        <begin position="660"/>
        <end position="669"/>
    </location>
</feature>
<feature type="strand" evidence="32">
    <location>
        <begin position="672"/>
        <end position="674"/>
    </location>
</feature>
<feature type="helix" evidence="32">
    <location>
        <begin position="685"/>
        <end position="703"/>
    </location>
</feature>
<feature type="strand" evidence="32">
    <location>
        <begin position="707"/>
        <end position="714"/>
    </location>
</feature>
<feature type="strand" evidence="32">
    <location>
        <begin position="716"/>
        <end position="724"/>
    </location>
</feature>
<feature type="helix" evidence="32">
    <location>
        <begin position="730"/>
        <end position="758"/>
    </location>
</feature>
<feature type="turn" evidence="32">
    <location>
        <begin position="764"/>
        <end position="766"/>
    </location>
</feature>
<feature type="strand" evidence="32">
    <location>
        <begin position="768"/>
        <end position="778"/>
    </location>
</feature>
<feature type="strand" evidence="32">
    <location>
        <begin position="780"/>
        <end position="782"/>
    </location>
</feature>
<feature type="helix" evidence="32">
    <location>
        <begin position="790"/>
        <end position="794"/>
    </location>
</feature>
<feature type="turn" evidence="32">
    <location>
        <begin position="795"/>
        <end position="798"/>
    </location>
</feature>
<feature type="helix" evidence="32">
    <location>
        <begin position="810"/>
        <end position="824"/>
    </location>
</feature>
<feature type="strand" evidence="32">
    <location>
        <begin position="826"/>
        <end position="828"/>
    </location>
</feature>
<feature type="helix" evidence="32">
    <location>
        <begin position="831"/>
        <end position="849"/>
    </location>
</feature>
<feature type="turn" evidence="32">
    <location>
        <begin position="852"/>
        <end position="855"/>
    </location>
</feature>
<feature type="strand" evidence="32">
    <location>
        <begin position="862"/>
        <end position="865"/>
    </location>
</feature>
<feature type="helix" evidence="32">
    <location>
        <begin position="871"/>
        <end position="879"/>
    </location>
</feature>
<feature type="helix" evidence="32">
    <location>
        <begin position="892"/>
        <end position="895"/>
    </location>
</feature>
<feature type="strand" evidence="32">
    <location>
        <begin position="897"/>
        <end position="899"/>
    </location>
</feature>
<feature type="helix" evidence="32">
    <location>
        <begin position="903"/>
        <end position="917"/>
    </location>
</feature>
<feature type="helix" evidence="32">
    <location>
        <begin position="921"/>
        <end position="930"/>
    </location>
</feature>
<feature type="helix" evidence="32">
    <location>
        <begin position="940"/>
        <end position="942"/>
    </location>
</feature>
<feature type="helix" evidence="32">
    <location>
        <begin position="943"/>
        <end position="948"/>
    </location>
</feature>
<feature type="strand" evidence="32">
    <location>
        <begin position="949"/>
        <end position="951"/>
    </location>
</feature>
<feature type="strand" evidence="32">
    <location>
        <begin position="955"/>
        <end position="957"/>
    </location>
</feature>
<feature type="helix" evidence="32">
    <location>
        <begin position="961"/>
        <end position="975"/>
    </location>
</feature>
<feature type="strand" evidence="32">
    <location>
        <begin position="976"/>
        <end position="979"/>
    </location>
</feature>
<feature type="helix" evidence="32">
    <location>
        <begin position="983"/>
        <end position="994"/>
    </location>
</feature>
<feature type="helix" evidence="32">
    <location>
        <begin position="997"/>
        <end position="1005"/>
    </location>
</feature>
<feature type="strand" evidence="32">
    <location>
        <begin position="1007"/>
        <end position="1009"/>
    </location>
</feature>
<feature type="helix" evidence="32">
    <location>
        <begin position="1011"/>
        <end position="1019"/>
    </location>
</feature>
<feature type="helix" evidence="32">
    <location>
        <begin position="1024"/>
        <end position="1030"/>
    </location>
</feature>
<feature type="helix" evidence="32">
    <location>
        <begin position="1037"/>
        <end position="1042"/>
    </location>
</feature>
<feature type="helix" evidence="32">
    <location>
        <begin position="1046"/>
        <end position="1068"/>
    </location>
</feature>
<feature type="turn" evidence="32">
    <location>
        <begin position="1069"/>
        <end position="1071"/>
    </location>
</feature>
<feature type="strand" evidence="32">
    <location>
        <begin position="1072"/>
        <end position="1075"/>
    </location>
</feature>
<feature type="helix" evidence="32">
    <location>
        <begin position="1082"/>
        <end position="1094"/>
    </location>
</feature>
<feature type="helix" evidence="32">
    <location>
        <begin position="1106"/>
        <end position="1109"/>
    </location>
</feature>
<feature type="strand" evidence="32">
    <location>
        <begin position="1114"/>
        <end position="1118"/>
    </location>
</feature>
<feature type="helix" evidence="32">
    <location>
        <begin position="1122"/>
        <end position="1125"/>
    </location>
</feature>
<feature type="strand" evidence="32">
    <location>
        <begin position="1130"/>
        <end position="1135"/>
    </location>
</feature>
<feature type="turn" evidence="32">
    <location>
        <begin position="1136"/>
        <end position="1139"/>
    </location>
</feature>
<feature type="strand" evidence="32">
    <location>
        <begin position="1151"/>
        <end position="1156"/>
    </location>
</feature>
<feature type="strand" evidence="32">
    <location>
        <begin position="1166"/>
        <end position="1168"/>
    </location>
</feature>
<feature type="helix" evidence="32">
    <location>
        <begin position="1175"/>
        <end position="1180"/>
    </location>
</feature>
<feature type="helix" evidence="32">
    <location>
        <begin position="1181"/>
        <end position="1185"/>
    </location>
</feature>
<feature type="turn" evidence="32">
    <location>
        <begin position="1186"/>
        <end position="1188"/>
    </location>
</feature>
<feature type="strand" evidence="32">
    <location>
        <begin position="1192"/>
        <end position="1194"/>
    </location>
</feature>
<feature type="helix" evidence="32">
    <location>
        <begin position="1197"/>
        <end position="1207"/>
    </location>
</feature>
<feature type="strand" evidence="32">
    <location>
        <begin position="1226"/>
        <end position="1228"/>
    </location>
</feature>
<feature type="strand" evidence="32">
    <location>
        <begin position="1231"/>
        <end position="1233"/>
    </location>
</feature>
<feature type="helix" evidence="32">
    <location>
        <begin position="1244"/>
        <end position="1247"/>
    </location>
</feature>
<feature type="strand" evidence="32">
    <location>
        <begin position="1251"/>
        <end position="1254"/>
    </location>
</feature>
<feature type="helix" evidence="32">
    <location>
        <begin position="1259"/>
        <end position="1262"/>
    </location>
</feature>
<feature type="helix" evidence="32">
    <location>
        <begin position="1269"/>
        <end position="1283"/>
    </location>
</feature>
<feature type="turn" evidence="32">
    <location>
        <begin position="1284"/>
        <end position="1286"/>
    </location>
</feature>
<feature type="strand" evidence="32">
    <location>
        <begin position="1291"/>
        <end position="1296"/>
    </location>
</feature>
<feature type="turn" evidence="32">
    <location>
        <begin position="1300"/>
        <end position="1303"/>
    </location>
</feature>
<feature type="turn" evidence="32">
    <location>
        <begin position="1327"/>
        <end position="1329"/>
    </location>
</feature>
<feature type="strand" evidence="32">
    <location>
        <begin position="1351"/>
        <end position="1353"/>
    </location>
</feature>
<feature type="helix" evidence="32">
    <location>
        <begin position="1355"/>
        <end position="1376"/>
    </location>
</feature>
<feature type="helix" evidence="32">
    <location>
        <begin position="1380"/>
        <end position="1382"/>
    </location>
</feature>
<feature type="strand" evidence="32">
    <location>
        <begin position="1383"/>
        <end position="1387"/>
    </location>
</feature>
<feature type="helix" evidence="32">
    <location>
        <begin position="1389"/>
        <end position="1391"/>
    </location>
</feature>
<feature type="helix" evidence="32">
    <location>
        <begin position="1397"/>
        <end position="1416"/>
    </location>
</feature>
<feature type="turn" evidence="32">
    <location>
        <begin position="1417"/>
        <end position="1419"/>
    </location>
</feature>
<feature type="turn" evidence="32">
    <location>
        <begin position="1422"/>
        <end position="1424"/>
    </location>
</feature>
<feature type="helix" evidence="32">
    <location>
        <begin position="1428"/>
        <end position="1443"/>
    </location>
</feature>
<feature type="helix" evidence="32">
    <location>
        <begin position="1447"/>
        <end position="1450"/>
    </location>
</feature>
<feature type="turn" evidence="32">
    <location>
        <begin position="1451"/>
        <end position="1453"/>
    </location>
</feature>
<feature type="strand" evidence="32">
    <location>
        <begin position="1454"/>
        <end position="1456"/>
    </location>
</feature>
<feature type="helix" evidence="32">
    <location>
        <begin position="1457"/>
        <end position="1462"/>
    </location>
</feature>
<feature type="strand" evidence="32">
    <location>
        <begin position="1472"/>
        <end position="1474"/>
    </location>
</feature>
<feature type="helix" evidence="32">
    <location>
        <begin position="1477"/>
        <end position="1492"/>
    </location>
</feature>
<feature type="turn" evidence="32">
    <location>
        <begin position="1493"/>
        <end position="1498"/>
    </location>
</feature>
<feature type="strand" evidence="32">
    <location>
        <begin position="1505"/>
        <end position="1507"/>
    </location>
</feature>
<feature type="helix" evidence="32">
    <location>
        <begin position="1511"/>
        <end position="1513"/>
    </location>
</feature>
<feature type="helix" evidence="32">
    <location>
        <begin position="1516"/>
        <end position="1533"/>
    </location>
</feature>
<feature type="strand" evidence="32">
    <location>
        <begin position="1534"/>
        <end position="1536"/>
    </location>
</feature>
<feature type="helix" evidence="32">
    <location>
        <begin position="1539"/>
        <end position="1556"/>
    </location>
</feature>
<feature type="helix" evidence="32">
    <location>
        <begin position="1565"/>
        <end position="1567"/>
    </location>
</feature>
<feature type="strand" evidence="32">
    <location>
        <begin position="1571"/>
        <end position="1575"/>
    </location>
</feature>
<feature type="helix" evidence="32">
    <location>
        <begin position="1580"/>
        <end position="1582"/>
    </location>
</feature>
<feature type="strand" evidence="32">
    <location>
        <begin position="1609"/>
        <end position="1613"/>
    </location>
</feature>
<feature type="helix" evidence="32">
    <location>
        <begin position="1635"/>
        <end position="1639"/>
    </location>
</feature>
<feature type="strand" evidence="32">
    <location>
        <begin position="1644"/>
        <end position="1646"/>
    </location>
</feature>
<feature type="helix" evidence="32">
    <location>
        <begin position="1649"/>
        <end position="1658"/>
    </location>
</feature>
<feature type="strand" evidence="32">
    <location>
        <begin position="1664"/>
        <end position="1670"/>
    </location>
</feature>
<feature type="strand" evidence="32">
    <location>
        <begin position="1672"/>
        <end position="1674"/>
    </location>
</feature>
<feature type="helix" evidence="32">
    <location>
        <begin position="1675"/>
        <end position="1683"/>
    </location>
</feature>
<feature type="strand" evidence="32">
    <location>
        <begin position="1689"/>
        <end position="1692"/>
    </location>
</feature>
<feature type="helix" evidence="32">
    <location>
        <begin position="1711"/>
        <end position="1715"/>
    </location>
</feature>
<feature type="helix" evidence="32">
    <location>
        <begin position="1720"/>
        <end position="1722"/>
    </location>
</feature>
<feature type="turn" evidence="32">
    <location>
        <begin position="1724"/>
        <end position="1730"/>
    </location>
</feature>
<feature type="strand" evidence="32">
    <location>
        <begin position="1736"/>
        <end position="1738"/>
    </location>
</feature>
<feature type="helix" evidence="32">
    <location>
        <begin position="1739"/>
        <end position="1752"/>
    </location>
</feature>
<feature type="strand" evidence="32">
    <location>
        <begin position="1758"/>
        <end position="1761"/>
    </location>
</feature>
<feature type="helix" evidence="32">
    <location>
        <begin position="1768"/>
        <end position="1779"/>
    </location>
</feature>
<feature type="helix" evidence="32">
    <location>
        <begin position="1782"/>
        <end position="1785"/>
    </location>
</feature>
<feature type="strand" evidence="32">
    <location>
        <begin position="1791"/>
        <end position="1797"/>
    </location>
</feature>
<feature type="helix" evidence="32">
    <location>
        <begin position="1798"/>
        <end position="1803"/>
    </location>
</feature>
<feature type="strand" evidence="32">
    <location>
        <begin position="1805"/>
        <end position="1807"/>
    </location>
</feature>
<feature type="helix" evidence="32">
    <location>
        <begin position="1808"/>
        <end position="1815"/>
    </location>
</feature>
<feature type="strand" evidence="32">
    <location>
        <begin position="1816"/>
        <end position="1824"/>
    </location>
</feature>
<feature type="strand" evidence="32">
    <location>
        <begin position="1833"/>
        <end position="1841"/>
    </location>
</feature>
<feature type="helix" evidence="32">
    <location>
        <begin position="1852"/>
        <end position="1854"/>
    </location>
</feature>
<feature type="helix" evidence="32">
    <location>
        <begin position="1856"/>
        <end position="1859"/>
    </location>
</feature>
<feature type="turn" evidence="32">
    <location>
        <begin position="1863"/>
        <end position="1865"/>
    </location>
</feature>
<feature type="helix" evidence="32">
    <location>
        <begin position="1868"/>
        <end position="1879"/>
    </location>
</feature>
<feature type="turn" evidence="32">
    <location>
        <begin position="1883"/>
        <end position="1886"/>
    </location>
</feature>
<feature type="helix" evidence="32">
    <location>
        <begin position="1889"/>
        <end position="1891"/>
    </location>
</feature>
<feature type="helix" evidence="32">
    <location>
        <begin position="1895"/>
        <end position="1905"/>
    </location>
</feature>
<feature type="helix" evidence="32">
    <location>
        <begin position="1910"/>
        <end position="1922"/>
    </location>
</feature>
<feature type="helix" evidence="32">
    <location>
        <begin position="1928"/>
        <end position="1942"/>
    </location>
</feature>
<feature type="strand" evidence="32">
    <location>
        <begin position="1949"/>
        <end position="1951"/>
    </location>
</feature>
<feature type="turn" evidence="32">
    <location>
        <begin position="1958"/>
        <end position="1961"/>
    </location>
</feature>
<feature type="helix" evidence="32">
    <location>
        <begin position="1962"/>
        <end position="1979"/>
    </location>
</feature>
<feature type="helix" evidence="32">
    <location>
        <begin position="1982"/>
        <end position="1993"/>
    </location>
</feature>
<feature type="strand" evidence="32">
    <location>
        <begin position="1999"/>
        <end position="2003"/>
    </location>
</feature>
<feature type="strand" evidence="32">
    <location>
        <begin position="2008"/>
        <end position="2021"/>
    </location>
</feature>
<feature type="helix" evidence="32">
    <location>
        <begin position="2030"/>
        <end position="2044"/>
    </location>
</feature>
<feature type="helix" evidence="32">
    <location>
        <begin position="2054"/>
        <end position="2062"/>
    </location>
</feature>
<feature type="helix" evidence="32">
    <location>
        <begin position="2072"/>
        <end position="2075"/>
    </location>
</feature>
<feature type="helix" evidence="32">
    <location>
        <begin position="2079"/>
        <end position="2083"/>
    </location>
</feature>
<feature type="strand" evidence="32">
    <location>
        <begin position="2106"/>
        <end position="2109"/>
    </location>
</feature>
<accession>P03523</accession>
<accession>Q86125</accession>
<dbReference type="EC" id="2.7.7.48" evidence="1"/>
<dbReference type="EC" id="3.6.1.-" evidence="7"/>
<dbReference type="EC" id="2.7.7.88" evidence="17 18"/>
<dbReference type="EC" id="2.1.1.375" evidence="8 9"/>
<dbReference type="EMBL" id="X00939">
    <property type="protein sequence ID" value="CAA25453.1"/>
    <property type="molecule type" value="Genomic_RNA"/>
</dbReference>
<dbReference type="EMBL" id="J02428">
    <property type="protein sequence ID" value="AAA48371.1"/>
    <property type="molecule type" value="Genomic_RNA"/>
</dbReference>
<dbReference type="PIR" id="A04119">
    <property type="entry name" value="ZLVN"/>
</dbReference>
<dbReference type="RefSeq" id="NP_041716.1">
    <property type="nucleotide sequence ID" value="NC_001560.1"/>
</dbReference>
<dbReference type="PDB" id="5A22">
    <property type="method" value="EM"/>
    <property type="resolution" value="3.80 A"/>
    <property type="chains" value="A=1-2109"/>
</dbReference>
<dbReference type="PDB" id="6U1X">
    <property type="method" value="EM"/>
    <property type="resolution" value="3.00 A"/>
    <property type="chains" value="A=1-2109"/>
</dbReference>
<dbReference type="PDBsum" id="5A22"/>
<dbReference type="PDBsum" id="6U1X"/>
<dbReference type="EMDB" id="EMD-20614"/>
<dbReference type="EMDB" id="EMD-6337"/>
<dbReference type="SMR" id="P03523"/>
<dbReference type="KEGG" id="vg:1489835"/>
<dbReference type="BRENDA" id="2.1.1.375">
    <property type="organism ID" value="14216"/>
</dbReference>
<dbReference type="BRENDA" id="2.7.7.88">
    <property type="organism ID" value="14216"/>
</dbReference>
<dbReference type="CD-CODE" id="01BEC43A">
    <property type="entry name" value="Synthetic Condensate 000315"/>
</dbReference>
<dbReference type="CD-CODE" id="0E37FC39">
    <property type="entry name" value="Cytoplasmic viral factory"/>
</dbReference>
<dbReference type="EvolutionaryTrace" id="P03523"/>
<dbReference type="Proteomes" id="UP000002327">
    <property type="component" value="Segment"/>
</dbReference>
<dbReference type="GO" id="GO:0030430">
    <property type="term" value="C:host cell cytoplasm"/>
    <property type="evidence" value="ECO:0007669"/>
    <property type="project" value="UniProtKB-SubCell"/>
</dbReference>
<dbReference type="GO" id="GO:0044423">
    <property type="term" value="C:virion component"/>
    <property type="evidence" value="ECO:0007669"/>
    <property type="project" value="UniProtKB-KW"/>
</dbReference>
<dbReference type="GO" id="GO:0005524">
    <property type="term" value="F:ATP binding"/>
    <property type="evidence" value="ECO:0007669"/>
    <property type="project" value="UniProtKB-KW"/>
</dbReference>
<dbReference type="GO" id="GO:0003924">
    <property type="term" value="F:GTPase activity"/>
    <property type="evidence" value="ECO:0007669"/>
    <property type="project" value="RHEA"/>
</dbReference>
<dbReference type="GO" id="GO:0046872">
    <property type="term" value="F:metal ion binding"/>
    <property type="evidence" value="ECO:0007669"/>
    <property type="project" value="UniProtKB-KW"/>
</dbReference>
<dbReference type="GO" id="GO:0004482">
    <property type="term" value="F:mRNA 5'-cap (guanine-N7-)-methyltransferase activity"/>
    <property type="evidence" value="ECO:0007669"/>
    <property type="project" value="InterPro"/>
</dbReference>
<dbReference type="GO" id="GO:0003968">
    <property type="term" value="F:RNA-directed RNA polymerase activity"/>
    <property type="evidence" value="ECO:0007669"/>
    <property type="project" value="UniProtKB-KW"/>
</dbReference>
<dbReference type="GO" id="GO:0039689">
    <property type="term" value="P:negative stranded viral RNA replication"/>
    <property type="evidence" value="ECO:0000314"/>
    <property type="project" value="UniProtKB"/>
</dbReference>
<dbReference type="GO" id="GO:0019083">
    <property type="term" value="P:viral transcription"/>
    <property type="evidence" value="ECO:0007669"/>
    <property type="project" value="UniProtKB-KW"/>
</dbReference>
<dbReference type="FunFam" id="3.40.50.150:FF:000473">
    <property type="entry name" value="RNA-directed RNA polymerase L"/>
    <property type="match status" value="1"/>
</dbReference>
<dbReference type="Gene3D" id="3.40.50.150">
    <property type="entry name" value="Vaccinia Virus protein VP39"/>
    <property type="match status" value="1"/>
</dbReference>
<dbReference type="InterPro" id="IPR039530">
    <property type="entry name" value="L_methyltransferase_rhabdo"/>
</dbReference>
<dbReference type="InterPro" id="IPR039736">
    <property type="entry name" value="L_poly_C"/>
</dbReference>
<dbReference type="InterPro" id="IPR048398">
    <property type="entry name" value="Methyltrans_Mon_C"/>
</dbReference>
<dbReference type="InterPro" id="IPR048397">
    <property type="entry name" value="Methyltrans_Mon_CD"/>
</dbReference>
<dbReference type="InterPro" id="IPR026890">
    <property type="entry name" value="Mononeg_mRNAcap"/>
</dbReference>
<dbReference type="InterPro" id="IPR014023">
    <property type="entry name" value="Mononeg_RNA_pol_cat"/>
</dbReference>
<dbReference type="InterPro" id="IPR025786">
    <property type="entry name" value="Mononega_L_MeTrfase"/>
</dbReference>
<dbReference type="InterPro" id="IPR017234">
    <property type="entry name" value="RNA-dir_pol_rhabdovirus"/>
</dbReference>
<dbReference type="InterPro" id="IPR029063">
    <property type="entry name" value="SAM-dependent_MTases_sf"/>
</dbReference>
<dbReference type="NCBIfam" id="TIGR04198">
    <property type="entry name" value="paramyx_RNAcap"/>
    <property type="match status" value="1"/>
</dbReference>
<dbReference type="Pfam" id="PF21080">
    <property type="entry name" value="Methyltrans_Mon_1st"/>
    <property type="match status" value="1"/>
</dbReference>
<dbReference type="Pfam" id="PF14314">
    <property type="entry name" value="Methyltrans_Mon_2nd"/>
    <property type="match status" value="1"/>
</dbReference>
<dbReference type="Pfam" id="PF21081">
    <property type="entry name" value="Methyltrans_Mon_3rd"/>
    <property type="match status" value="1"/>
</dbReference>
<dbReference type="Pfam" id="PF14318">
    <property type="entry name" value="Mononeg_mRNAcap"/>
    <property type="match status" value="1"/>
</dbReference>
<dbReference type="Pfam" id="PF00946">
    <property type="entry name" value="Mononeg_RNA_pol"/>
    <property type="match status" value="1"/>
</dbReference>
<dbReference type="PIRSF" id="PIRSF037546">
    <property type="entry name" value="RNA_pol_RhabdoV_sub"/>
    <property type="match status" value="1"/>
</dbReference>
<dbReference type="PROSITE" id="PS50526">
    <property type="entry name" value="RDRP_SSRNA_NEG_NONSEG"/>
    <property type="match status" value="1"/>
</dbReference>
<dbReference type="PROSITE" id="PS51590">
    <property type="entry name" value="SAM_MT_MNV_L"/>
    <property type="match status" value="1"/>
</dbReference>
<gene>
    <name type="primary">L</name>
</gene>
<proteinExistence type="evidence at protein level"/>
<reference key="1">
    <citation type="journal article" date="1984" name="J. Virol.">
        <title>Primary structure of the vesicular stomatitis virus polymerase (L) gene: evidence for a high frequency of mutations.</title>
        <authorList>
            <person name="Schubert M."/>
            <person name="Harmison G.G."/>
            <person name="Meier E."/>
        </authorList>
    </citation>
    <scope>NUCLEOTIDE SEQUENCE [GENOMIC RNA]</scope>
</reference>
<reference key="2">
    <citation type="journal article" date="1977" name="J. Virol.">
        <title>Two methyltransferase activities in the purified virions of vesicular stomatitis virus.</title>
        <authorList>
            <person name="Testa D."/>
            <person name="Banerjee A.K."/>
        </authorList>
    </citation>
    <scope>CATALYTIC ACTIVITY</scope>
    <scope>BIOPHYSICOCHEMICAL PROPERTIES</scope>
</reference>
<reference key="3">
    <citation type="journal article" date="1985" name="Proc. Natl. Acad. Sci. U.S.A.">
        <title>Expression of a cDNA encoding a functional 241-kilodalton vesicular stomatitis virus RNA polymerase.</title>
        <authorList>
            <person name="Schubert M."/>
            <person name="Harmison G.G."/>
            <person name="Richardson C.D."/>
            <person name="Meier E."/>
        </authorList>
    </citation>
    <scope>SUBCELLULAR LOCATION</scope>
</reference>
<reference key="4">
    <citation type="journal article" date="1988" name="J. Gen. Virol.">
        <title>The L protein of vesicular stomatitis virus modulates the response of the polyadenylic acid polymerase to S-adenosylhomocysteine.</title>
        <authorList>
            <person name="Hunt D.M."/>
            <person name="Mehta R."/>
            <person name="Hutchinson K.L."/>
        </authorList>
    </citation>
    <scope>FUNCTION</scope>
</reference>
<reference key="5">
    <citation type="journal article" date="2002" name="Biochim. Biophys. Acta">
        <title>Transcriptional control of the RNA-dependent RNA polymerase of vesicular stomatitis virus.</title>
        <authorList>
            <person name="Barr J.N."/>
            <person name="Whelan S.P."/>
            <person name="Wertz G.W."/>
        </authorList>
    </citation>
    <scope>REVIEW</scope>
</reference>
<reference key="6">
    <citation type="journal article" date="2005" name="J. Virol.">
        <title>Amino acid residues within conserved domain VI of the vesicular stomatitis virus large polymerase protein essential for mRNA cap methyltransferase activity.</title>
        <authorList>
            <person name="Li J."/>
            <person name="Fontaine-Rodriguez E.C."/>
            <person name="Whelan S.P."/>
        </authorList>
    </citation>
    <scope>FUNCTION</scope>
    <scope>MUTAGENESIS OF LYS-1651; GLY-1674; PHE-1691; ASP-1762; LYS-1795 AND GLU-1833</scope>
    <scope>CATALYTIC ACTIVITY</scope>
</reference>
<reference key="7">
    <citation type="journal article" date="2006" name="Proc. Natl. Acad. Sci. U.S.A.">
        <title>A unique strategy for mRNA cap methylation used by vesicular stomatitis virus.</title>
        <authorList>
            <person name="Li J."/>
            <person name="Wang J.T."/>
            <person name="Whelan S.P."/>
        </authorList>
    </citation>
    <scope>FUNCTION</scope>
</reference>
<reference key="8">
    <citation type="journal article" date="2008" name="J. Virol.">
        <title>A conserved motif in region v of the large polymerase proteins of nonsegmented negative-sense RNA viruses that is essential for mRNA capping.</title>
        <authorList>
            <person name="Li J."/>
            <person name="Rahmeh A."/>
            <person name="Morelli M."/>
            <person name="Whelan S.P."/>
        </authorList>
    </citation>
    <scope>CATALYTIC ACTIVITY</scope>
</reference>
<reference key="9">
    <citation type="journal article" date="2009" name="J. Virol.">
        <title>Ribose 2'-O methylation of the vesicular stomatitis virus mRNA cap precedes and facilitates subsequent guanine-N-7 methylation by the large polymerase protein.</title>
        <authorList>
            <person name="Rahmeh A.A."/>
            <person name="Li J."/>
            <person name="Kranzusch P.J."/>
            <person name="Whelan S.P."/>
        </authorList>
    </citation>
    <scope>FUNCTION</scope>
    <scope>CATALYTIC ACTIVITY</scope>
    <scope>MUTAGENESIS OF LYS-1651; ASP-1762; LYS-1795 AND GLU-1833</scope>
</reference>
<reference key="10">
    <citation type="journal article" date="2010" name="Proc. Natl. Acad. Sci. U.S.A.">
        <title>Molecular architecture of the vesicular stomatitis virus RNA polymerase.</title>
        <authorList>
            <person name="Rahmeh A.A."/>
            <person name="Schenk A.D."/>
            <person name="Danek E.I."/>
            <person name="Kranzusch P.J."/>
            <person name="Liang B."/>
            <person name="Walz T."/>
            <person name="Whelan S.P."/>
        </authorList>
    </citation>
    <scope>SUBUNIT</scope>
</reference>
<reference key="11">
    <citation type="journal article" date="2011" name="Virus Res.">
        <title>An unconventional pathway of mRNA cap formation by vesiculoviruses.</title>
        <authorList>
            <person name="Ogino T."/>
            <person name="Banerjee A.K."/>
        </authorList>
    </citation>
    <scope>REVIEW</scope>
</reference>
<reference key="12">
    <citation type="journal article" date="2012" name="Proc. Natl. Acad. Sci. U.S.A.">
        <title>Critical phosphoprotein elements that regulate polymerase architecture and function in vesicular stomatitis virus.</title>
        <authorList>
            <person name="Rahmeh A.A."/>
            <person name="Morin B."/>
            <person name="Schenk A.D."/>
            <person name="Liang B."/>
            <person name="Heinrich B.S."/>
            <person name="Brusic V."/>
            <person name="Walz T."/>
            <person name="Whelan S.P."/>
        </authorList>
    </citation>
    <scope>FUNCTION</scope>
</reference>
<reference key="13">
    <citation type="journal article" date="2012" name="EMBO J.">
        <title>Mechanism of RNA synthesis initiation by the vesicular stomatitis virus polymerase.</title>
        <authorList>
            <person name="Morin B."/>
            <person name="Rahmeh A.A."/>
            <person name="Whelan S.P."/>
        </authorList>
    </citation>
    <scope>FUNCTION</scope>
</reference>
<reference key="14">
    <citation type="journal article" date="2013" name="Biochem. Biophys. Res. Commun.">
        <title>Asymmetric packaging of polymerases within vesicular stomatitis virus.</title>
        <authorList>
            <person name="Hodges J."/>
            <person name="Tang X."/>
            <person name="Landesman M.B."/>
            <person name="Ruedas J.B."/>
            <person name="Ghimire A."/>
            <person name="Gudheti M.V."/>
            <person name="Perrault J."/>
            <person name="Jorgensen E.M."/>
            <person name="Gerton J.M."/>
            <person name="Saffarian S."/>
        </authorList>
    </citation>
    <scope>SUBCELLULAR LOCATION</scope>
</reference>
<reference key="15">
    <citation type="journal article" date="2014" name="J. Biol. Chem.">
        <title>Sensitivity of the polymerase of vesicular stomatitis virus to 2' substitutions in the template and nucleotide triphosphate during initiation and elongation.</title>
        <authorList>
            <person name="Morin B."/>
            <person name="Whelan S.P."/>
        </authorList>
    </citation>
    <scope>FUNCTION</scope>
</reference>
<reference key="16">
    <citation type="journal article" date="2013" name="Curr. Opin. Virol.">
        <title>The polymerase of negative-stranded RNA viruses.</title>
        <authorList>
            <person name="Morin B."/>
            <person name="Kranzusch P.J."/>
            <person name="Rahmeh A.A."/>
            <person name="Whelan S.P."/>
        </authorList>
    </citation>
    <scope>REVIEW</scope>
</reference>
<reference key="17">
    <citation type="journal article" date="2014" name="J. Virol.">
        <title>Rational design of human metapneumovirus live attenuated vaccine candidates by inhibiting viral mRNA cap methyltransferase.</title>
        <authorList>
            <person name="Zhang Y."/>
            <person name="Wei Y."/>
            <person name="Zhang X."/>
            <person name="Cai H."/>
            <person name="Niewiesk S."/>
            <person name="Li J."/>
        </authorList>
    </citation>
    <scope>MUTAGENESIS OF LYS-1651; GLY-1670; GLY-1674 AND ASP-1735</scope>
    <source>
        <strain>NL</strain>
    </source>
</reference>
<reference key="18">
    <citation type="journal article" date="2016" name="Nucleic Acids Res.">
        <title>Signature motifs of GDP polyribonucleotidyltransferase, a non-segmented negative strand RNA viral mRNA capping enzyme, domain in the L protein are required for covalent enzyme-pRNA intermediate formation.</title>
        <authorList>
            <person name="Neubauer J."/>
            <person name="Ogino M."/>
            <person name="Green T.J."/>
            <person name="Ogino T."/>
        </authorList>
    </citation>
    <scope>CATALYTIC ACTIVITY</scope>
</reference>
<reference key="19">
    <citation type="journal article" date="2017" name="J. Virol.">
        <title>5'-Phospho-RNA Acceptor Specificity of GDP Polyribonucleotidyltransferase of Vesicular Stomatitis Virus in mRNA Capping.</title>
        <authorList>
            <person name="Ogino M."/>
            <person name="Ogino T."/>
        </authorList>
    </citation>
    <scope>ACTIVE SITE</scope>
    <scope>CATALYTIC ACTIVITY</scope>
    <scope>ACTIVITY REGULATION</scope>
    <scope>BIOPHYSICOCHEMICAL PROPERTIES</scope>
</reference>
<reference key="20">
    <citation type="journal article" date="2019" name="Front. Microbiol.">
        <title>RNA Synthesis and Capping by Non-segmented Negative Strand RNA Viral Polymerases: Lessons From a Prototypic Virus.</title>
        <authorList>
            <person name="Ogino T."/>
            <person name="Green T.J."/>
        </authorList>
    </citation>
    <scope>REVIEW</scope>
</reference>
<reference evidence="30" key="21">
    <citation type="journal article" date="2015" name="Cell">
        <title>Structure of the L protein of vesicular stomatitis virus from electron cryomicroscopy.</title>
        <authorList>
            <person name="Liang B."/>
            <person name="Li Z."/>
            <person name="Jenni S."/>
            <person name="Rahmeh A.A."/>
            <person name="Morin B.M."/>
            <person name="Grant T."/>
            <person name="Grigorieff N."/>
            <person name="Harrison S.C."/>
            <person name="Whelan S.P."/>
        </authorList>
    </citation>
    <scope>STRUCTURE BY ELECTRON MICROSCOPY (3.80 ANGSTROMS)</scope>
    <scope>DOMAIN</scope>
    <scope>ZINC-BINDING</scope>
</reference>
<reference evidence="31" key="22">
    <citation type="journal article" date="2020" name="Cell Rep.">
        <title>Structure of the Vesicular Stomatitis Virus L Protein in Complex with Its Phosphoprotein Cofactor.</title>
        <authorList>
            <person name="Jenni S."/>
            <person name="Bloyet L.M."/>
            <person name="Diaz-Avalos R."/>
            <person name="Liang B."/>
            <person name="Whelan S.P.J."/>
            <person name="Grigorieff N."/>
            <person name="Harrison S.C."/>
        </authorList>
    </citation>
    <scope>STRUCTURE BY ELECTRON MICROSCOPY (3.00 ANGSTROMS)</scope>
    <scope>ZINC-BINDING</scope>
    <scope>DOMAIN</scope>
    <scope>INTERACTION WITH THE PHOSPHOPROTEIN</scope>
    <scope>FUNCTION</scope>
</reference>
<reference key="23">
    <citation type="journal article" date="2022" name="PLoS Pathog.">
        <title>GDP polyribonucleotidyltransferase domain of vesicular stomatitis virus polymerase regulates leader-promoter escape and polyadenylation-coupled termination during stop-start transcription.</title>
        <authorList>
            <person name="Ogino M."/>
            <person name="Green T.J."/>
            <person name="Ogino T."/>
        </authorList>
    </citation>
    <scope>CATALYTIC ACTIVITY</scope>
    <scope>DOMAIN</scope>
    <scope>MUTAGENESIS OF LYS-1177; ARG-1178; ARG-1181 AND ARG-1183</scope>
</reference>
<reference key="24">
    <citation type="journal article" date="2022" name="Proc. Natl. Acad. Sci. U.S.A.">
        <title>Locations and in situ structure of the polymerase complex inside the virion of vesicular stomatitis virus.</title>
        <authorList>
            <person name="Si Z."/>
            <person name="Zhou K."/>
            <person name="Tsao J."/>
            <person name="Luo M."/>
            <person name="Zhou Z.H."/>
        </authorList>
    </citation>
    <scope>STRUCTURE BY ELECTRON MICROSCOPY (15.0 ANGSTROMS) OF THE VIRION</scope>
    <scope>SUBCELLULAR LOCATION</scope>
    <scope>FUNCTION</scope>
    <scope>INTERACTION WITH THE NUCLEOPROTEIN</scope>
    <scope>INTERACTION WITH THE PHOSPHOPROTEIN</scope>
</reference>
<comment type="function">
    <text evidence="1 5 6 8 11 12 14 19 21 23 27">Multifunctional enzyme responsible for RNA synthesis (replicase and transcriptase), cap addition, and cap methylation (PubMed:24526687). Also performs the polyadenylation of subgenomic mRNAs by a stuttering mechanism at a slipery stop site present at the end of viral genes (PubMed:2844966). The template is composed of the viral RNA tightly encapsidated by the nucleoprotein (N) (PubMed:31914397). L is packaged into virions during assembly and translocates to the 3' leader promoter to initiate transcription after entering the host cells (PubMed:35476516). During transcription and replication of the genome, L does not bind the N-RNA complex directly, but is bridged by its non-catalytic cofactor P, which interacts with L and N oligomers simultaneously (PubMed:35476516). In the transcription mode, the polymerase performs the sequential transcription of all mRNAs using a termination-reinitiation mechanism responding to gene start and gene end signals. Some polymerase disengage from the template at each gene junction, resulting in a decreasing abundance of transcripts from the 3' to the 5' end of the genome (By similarity). The first gene is the most transcribed, and the last the least transcribed (Probable). The viral phosphoprotein helps the polymerase to engage the N-RNA template and acts as a processivity factor (PubMed:22246179, PubMed:22908284). Polyribonucleotidyl transferase (PRNTase) adds the cap structure when the nascent RNA chain length has reached few nucleotides (PubMed:19710136). Ribose 2'-O methylation of viral mRNA cap precedes and facilitates subsequent guanine-N-7 methylation, both activities being carried by the viral polymerase (PubMed:16227259, PubMed:16709677, PubMed:19710136). In the replication mode, the polymerase replicates the whole viral genome without recognizing the gene end transcriptional signals (By similarity). The ability of the polymerase to override the gene end signals as it is producing the antigenome is probably due to replicative RNA becoming encapsidated with nucleoprotein as it is synthesized (By similarity).</text>
</comment>
<comment type="catalytic activity">
    <reaction evidence="3">
        <text>RNA(n) + a ribonucleoside 5'-triphosphate = RNA(n+1) + diphosphate</text>
        <dbReference type="Rhea" id="RHEA:21248"/>
        <dbReference type="Rhea" id="RHEA-COMP:14527"/>
        <dbReference type="Rhea" id="RHEA-COMP:17342"/>
        <dbReference type="ChEBI" id="CHEBI:33019"/>
        <dbReference type="ChEBI" id="CHEBI:61557"/>
        <dbReference type="ChEBI" id="CHEBI:140395"/>
        <dbReference type="EC" id="2.7.7.48"/>
    </reaction>
</comment>
<comment type="catalytic activity">
    <reaction evidence="8">
        <text>GTP + H2O = GDP + phosphate + H(+)</text>
        <dbReference type="Rhea" id="RHEA:19669"/>
        <dbReference type="ChEBI" id="CHEBI:15377"/>
        <dbReference type="ChEBI" id="CHEBI:15378"/>
        <dbReference type="ChEBI" id="CHEBI:37565"/>
        <dbReference type="ChEBI" id="CHEBI:43474"/>
        <dbReference type="ChEBI" id="CHEBI:58189"/>
    </reaction>
</comment>
<comment type="catalytic activity">
    <reaction evidence="7 17 18">
        <text>a 5'-end triphospho-adenylyl-adenylyl-cytidylyl-adenosine in mRNA + GDP + H(+) = a 5'-end (5'-triphosphoguanosine)-adenylyl-adenylyl-cytidylyl-adenosine in mRNA + diphosphate</text>
        <dbReference type="Rhea" id="RHEA:65436"/>
        <dbReference type="Rhea" id="RHEA-COMP:16797"/>
        <dbReference type="Rhea" id="RHEA-COMP:16799"/>
        <dbReference type="ChEBI" id="CHEBI:15378"/>
        <dbReference type="ChEBI" id="CHEBI:33019"/>
        <dbReference type="ChEBI" id="CHEBI:58189"/>
        <dbReference type="ChEBI" id="CHEBI:156484"/>
        <dbReference type="ChEBI" id="CHEBI:156503"/>
        <dbReference type="EC" id="2.7.7.88"/>
    </reaction>
</comment>
<comment type="catalytic activity">
    <reaction evidence="5 8 9">
        <text>a 5'-end (5'-triphosphoguanosine)-adenylyl-adenylyl-cytidylyl-adenosine in mRNA + 2 S-adenosyl-L-methionine = a 5'-end (N(7)-methyl 5'-triphosphoguanosine)-(2'-O-methyladenylyl)-adenylyl-cytidylyl-adenosine in mRNA + 2 S-adenosyl-L-homocysteine + H(+)</text>
        <dbReference type="Rhea" id="RHEA:65376"/>
        <dbReference type="Rhea" id="RHEA-COMP:16797"/>
        <dbReference type="Rhea" id="RHEA-COMP:16798"/>
        <dbReference type="ChEBI" id="CHEBI:15378"/>
        <dbReference type="ChEBI" id="CHEBI:57856"/>
        <dbReference type="ChEBI" id="CHEBI:59789"/>
        <dbReference type="ChEBI" id="CHEBI:156483"/>
        <dbReference type="ChEBI" id="CHEBI:156484"/>
        <dbReference type="EC" id="2.1.1.375"/>
    </reaction>
</comment>
<comment type="catalytic activity">
    <reaction evidence="5 8 9">
        <text>a 5'-end (5'-triphosphoguanosine)-adenylyl-adenylyl-cytidylyl-adenosine in mRNA + S-adenosyl-L-methionine = a 5'-end (5'-triphosphoguanosine)-(2'-O-methyladenylyl)-adenylyl-cytidylyl-adenosine in mRNA + S-adenosyl-L-homocysteine + H(+)</text>
        <dbReference type="Rhea" id="RHEA:65380"/>
        <dbReference type="Rhea" id="RHEA-COMP:16797"/>
        <dbReference type="Rhea" id="RHEA-COMP:16801"/>
        <dbReference type="ChEBI" id="CHEBI:15378"/>
        <dbReference type="ChEBI" id="CHEBI:57856"/>
        <dbReference type="ChEBI" id="CHEBI:59789"/>
        <dbReference type="ChEBI" id="CHEBI:156482"/>
        <dbReference type="ChEBI" id="CHEBI:156484"/>
    </reaction>
</comment>
<comment type="catalytic activity">
    <reaction evidence="8 9">
        <text>a 5'-end (5'-triphosphoguanosine)-(2'-O-methyladenylyl)-adenylyl-cytidylyl-adenosine in mRNA + S-adenosyl-L-methionine = a 5'-end (N(7)-methyl 5'-triphosphoguanosine)-(2'-O-methyladenylyl)-adenylyl-cytidylyl-adenosine in mRNA + S-adenosyl-L-homocysteine</text>
        <dbReference type="Rhea" id="RHEA:65440"/>
        <dbReference type="Rhea" id="RHEA-COMP:16798"/>
        <dbReference type="Rhea" id="RHEA-COMP:16801"/>
        <dbReference type="ChEBI" id="CHEBI:57856"/>
        <dbReference type="ChEBI" id="CHEBI:59789"/>
        <dbReference type="ChEBI" id="CHEBI:156482"/>
        <dbReference type="ChEBI" id="CHEBI:156483"/>
    </reaction>
</comment>
<comment type="activity regulation">
    <text evidence="18">The GDP polyribonucleotidyltransferase activity is inhibited by the GDP analog DAPDP.</text>
</comment>
<comment type="biophysicochemical properties">
    <kinetics>
        <KM evidence="9">0.5 uM for mRNA (nucleoside-2'-O-)-methyltransferase</KM>
        <KM evidence="9">10 uM for mRNA (guanine-N(7)-)-methyltransferase</KM>
        <KM evidence="18">0.031 uM for GDP polyribonucleotidyltransferase</KM>
    </kinetics>
</comment>
<comment type="subunit">
    <text evidence="10 21 23">May form homodimer (PubMed:21041632). Interacts with the P protein; the association of P and L forms the polymerase complex, positions it on the template and allows to package the L polymerase in the virion, since P acts as a bridge between N and L (PubMed:31914397, PubMed:35476516). L binds loosely to N and is further bridged by the P protein, which interacts with L and N oligomers simultaneously (PubMed:35476516).</text>
</comment>
<comment type="subcellular location">
    <subcellularLocation>
        <location evidence="13 23">Virion</location>
    </subcellularLocation>
    <subcellularLocation>
        <location evidence="20">Host cytoplasm</location>
    </subcellularLocation>
    <text evidence="18">L and P are packaged asymmetrically towards the blunt end of the virus. About 55 copies of L are present in the virion (PubMed:28053102).</text>
</comment>
<comment type="domain">
    <text evidence="16 22 29">The RNA-dependent RNA polymerase (RdRp) domain is responsible for the RNA sythesis (Probable). The polyribonucleotidyl transferase (PRNTase) domain is responsible for the initiation of transcription at the 3'-end of the genome (priming) and pre-mRNA 5'-capping during start-stop transcription (PubMed:35108335). The methyltransferase (MTase) domain is responsible for the cap methylation (PubMed:26144317).</text>
</comment>
<comment type="similarity">
    <text evidence="27">Belongs to the rhabdoviridae protein L family.</text>
</comment>
<evidence type="ECO:0000250" key="1">
    <source>
        <dbReference type="UniProtKB" id="P28887"/>
    </source>
</evidence>
<evidence type="ECO:0000255" key="2"/>
<evidence type="ECO:0000255" key="3">
    <source>
        <dbReference type="PROSITE-ProRule" id="PRU00539"/>
    </source>
</evidence>
<evidence type="ECO:0000255" key="4">
    <source>
        <dbReference type="PROSITE-ProRule" id="PRU00923"/>
    </source>
</evidence>
<evidence type="ECO:0000269" key="5">
    <source>
    </source>
</evidence>
<evidence type="ECO:0000269" key="6">
    <source>
    </source>
</evidence>
<evidence type="ECO:0000269" key="7">
    <source>
    </source>
</evidence>
<evidence type="ECO:0000269" key="8">
    <source>
    </source>
</evidence>
<evidence type="ECO:0000269" key="9">
    <source>
    </source>
</evidence>
<evidence type="ECO:0000269" key="10">
    <source>
    </source>
</evidence>
<evidence type="ECO:0000269" key="11">
    <source>
    </source>
</evidence>
<evidence type="ECO:0000269" key="12">
    <source>
    </source>
</evidence>
<evidence type="ECO:0000269" key="13">
    <source>
    </source>
</evidence>
<evidence type="ECO:0000269" key="14">
    <source>
    </source>
</evidence>
<evidence type="ECO:0000269" key="15">
    <source>
    </source>
</evidence>
<evidence type="ECO:0000269" key="16">
    <source>
    </source>
</evidence>
<evidence type="ECO:0000269" key="17">
    <source>
    </source>
</evidence>
<evidence type="ECO:0000269" key="18">
    <source>
    </source>
</evidence>
<evidence type="ECO:0000269" key="19">
    <source>
    </source>
</evidence>
<evidence type="ECO:0000269" key="20">
    <source>
    </source>
</evidence>
<evidence type="ECO:0000269" key="21">
    <source>
    </source>
</evidence>
<evidence type="ECO:0000269" key="22">
    <source>
    </source>
</evidence>
<evidence type="ECO:0000269" key="23">
    <source>
    </source>
</evidence>
<evidence type="ECO:0000303" key="24">
    <source>
    </source>
</evidence>
<evidence type="ECO:0000303" key="25">
    <source>
    </source>
</evidence>
<evidence type="ECO:0000303" key="26">
    <source>
    </source>
</evidence>
<evidence type="ECO:0000305" key="27"/>
<evidence type="ECO:0000305" key="28">
    <source>
    </source>
</evidence>
<evidence type="ECO:0000305" key="29">
    <source>
    </source>
</evidence>
<evidence type="ECO:0007744" key="30">
    <source>
        <dbReference type="PDB" id="5A22"/>
    </source>
</evidence>
<evidence type="ECO:0007744" key="31">
    <source>
        <dbReference type="PDB" id="6U1X"/>
    </source>
</evidence>
<evidence type="ECO:0007829" key="32">
    <source>
        <dbReference type="PDB" id="6U1X"/>
    </source>
</evidence>
<organism>
    <name type="scientific">Vesicular stomatitis Indiana virus (strain San Juan)</name>
    <name type="common">VSIV</name>
    <dbReference type="NCBI Taxonomy" id="11285"/>
    <lineage>
        <taxon>Viruses</taxon>
        <taxon>Riboviria</taxon>
        <taxon>Orthornavirae</taxon>
        <taxon>Negarnaviricota</taxon>
        <taxon>Haploviricotina</taxon>
        <taxon>Monjiviricetes</taxon>
        <taxon>Mononegavirales</taxon>
        <taxon>Rhabdoviridae</taxon>
        <taxon>Alpharhabdovirinae</taxon>
        <taxon>Vesiculovirus</taxon>
        <taxon>Vesiculovirus indiana</taxon>
    </lineage>
</organism>
<protein>
    <recommendedName>
        <fullName>RNA-directed RNA polymerase L</fullName>
        <shortName>Protein L</shortName>
    </recommendedName>
    <alternativeName>
        <fullName>Large structural protein</fullName>
    </alternativeName>
    <alternativeName>
        <fullName>Replicase</fullName>
    </alternativeName>
    <alternativeName>
        <fullName>Transcriptase</fullName>
    </alternativeName>
    <domain>
        <recommendedName>
            <fullName>RNA-directed RNA polymerase</fullName>
            <ecNumber evidence="1">2.7.7.48</ecNumber>
        </recommendedName>
    </domain>
    <domain>
        <recommendedName>
            <fullName evidence="27">GTP phosphohydrolase</fullName>
            <ecNumber evidence="7">3.6.1.-</ecNumber>
        </recommendedName>
    </domain>
    <domain>
        <recommendedName>
            <fullName evidence="27">GDP polyribonucleotidyltransferase</fullName>
            <ecNumber evidence="17 18">2.7.7.88</ecNumber>
        </recommendedName>
        <alternativeName>
            <fullName evidence="25">PRNTase</fullName>
        </alternativeName>
    </domain>
    <domain>
        <recommendedName>
            <fullName evidence="27">mRNA cap methyltransferase</fullName>
            <ecNumber evidence="8 9">2.1.1.375</ecNumber>
        </recommendedName>
        <alternativeName>
            <fullName evidence="24">mRNA (guanine-N(7)-)-methyltransferase</fullName>
            <shortName evidence="26">G-N7-MTase</shortName>
        </alternativeName>
        <alternativeName>
            <fullName evidence="24">mRNA (nucleoside-2'-O-)-methyltransferase</fullName>
            <shortName evidence="26">N1-2'-O-MTase</shortName>
        </alternativeName>
    </domain>
</protein>
<organismHost>
    <name type="scientific">Aedes</name>
    <dbReference type="NCBI Taxonomy" id="7158"/>
</organismHost>
<organismHost>
    <name type="scientific">Bos taurus</name>
    <name type="common">Bovine</name>
    <dbReference type="NCBI Taxonomy" id="9913"/>
</organismHost>
<organismHost>
    <name type="scientific">Culicoides</name>
    <dbReference type="NCBI Taxonomy" id="58271"/>
</organismHost>
<organismHost>
    <name type="scientific">Equus asinus</name>
    <name type="common">Donkey</name>
    <name type="synonym">Equus africanus asinus</name>
    <dbReference type="NCBI Taxonomy" id="9793"/>
</organismHost>
<organismHost>
    <name type="scientific">Equus caballus</name>
    <name type="common">Horse</name>
    <dbReference type="NCBI Taxonomy" id="9796"/>
</organismHost>
<organismHost>
    <name type="scientific">Homo sapiens</name>
    <name type="common">Human</name>
    <dbReference type="NCBI Taxonomy" id="9606"/>
</organismHost>
<organismHost>
    <name type="scientific">Lutzomyia</name>
    <dbReference type="NCBI Taxonomy" id="252607"/>
</organismHost>
<organismHost>
    <name type="scientific">Musca domestica</name>
    <name type="common">House fly</name>
    <dbReference type="NCBI Taxonomy" id="7370"/>
</organismHost>
<organismHost>
    <name type="scientific">Simuliidae</name>
    <name type="common">black flies</name>
    <dbReference type="NCBI Taxonomy" id="7190"/>
</organismHost>
<organismHost>
    <name type="scientific">Sus scrofa</name>
    <name type="common">Pig</name>
    <dbReference type="NCBI Taxonomy" id="9823"/>
</organismHost>
<sequence>MEVHDFETDEFNDFNEDDYATREFLNPDERMTYLNHADYNLNSPLISDDIDNLIRKFNSLPIPSMWDSKNWDGVLEMLTSCQANPISTSQMHKWMGSWLMSDNHDASQGYSFLHEVDKEAEITFDVVETFIRGWGNKPIEYIKKERWTDSFKILAYLCQKFLDLHKLTLILNAVSEVELLNLARTFKGKVRRSSHGTNICRIRVPSLGPTFISEGWAYFKKLDILMDPNFLLMVKDVIIGRMQTVLSMVCRIDNLFSEQDIFSLLNIYRIGDKIVERQGNFSYDLIKMVEPICNLKLMKLARESRPLVPQFPHFENHIKTSVDEGAKIDRGIRFLHDQIMSVKTVDLTLVIYGSFRHWGHPFIDYYTGLEKLHSQVTMKKDIDVSYAKALASDLARIVLFQQFNDHKKWFVNGDLLPHDHPFKSHVKENTWPTAAQVQDFGDKWHELPLIKCFEIPDLLDPSIIYSHKSHSMNRSEVLKHVRMNPNTPIPSKKVLQTMLDTKATNWKEFLKEIDEKGLDDDDLIIGLKGKERELKLAGRFFSLMSWKFPEYFVITEYLIKTHFVPMFKGLTMADDLTAVIKKMLDSSSGQGLKSYEAICIANHIDYEKWNNHQRKLSNGPVFRVMGQFLGYPSLIERTHEFFEKSLIYYNGRPDLMRVHNNTLINSTSQPVCWQGQEGGLEGLRQKGWTILNLLVIQREAKIRNTAVKVLAQGDNQVICTQYKTKKSRNVVELQGALNQMVSNNEKIMTAIKIGTGKLGLLINDDETMQSADYLNYGKIPIFRGVIRGLETKRWSRVTCVTNDQIPTCANIMSSVSTNALTVAHFAENPINAMIQYNYFGTFARLLLMMHDPALRQSLYEVQDKIPGLHSSTFKYAMLYLDPSIGGVSGMSLSRFLIRAFPDPVTESLSSWRFIHVHARSEHLKEMSAVFGNPEIAKFRITHIDKLVEDPTSLNIAMGMSPANLLKTEVKKCLIESRQTIRNQVIKDATIYLYHEEDRLRSFLWSINPLFPRFLSEFKSGTFLGVPDGLISLFQNSRTIRNSFKKKYHRELDDLIVRSEVSSLTHLGKLHLRRGSCKMWTCSATHADTLRYKSWGRTVIGTTVPHPLEMLGPQHRKETPCAPCNTSGFNYVSVHCPDGIHDVFSSRGPLPAYLGSKTSESTSILQPWERESKVPLIKRATRLRDAISWFVEPDSKLAMTILSNIHSLTGEEWTKRQHGFKRTGSALHRFSTSRMSHGGFASQSTAALTRLMATTDTMRDLGDQNFDFLFQATLLYAQITTTVARDGWITSCTDHYHIACKSCLRPIEEITLDSSMDYTPPDVSHVLKTWRNGEGSWGQEIKQIYPLEANWKNLAPAEQSYQVGRCIGFLYGDLAYRKSTHAEDSSLFPLSIQGRIRGRGFLKGLLDGLMRASCCQVIHRRSLAHLKRPANAVYGGLIYLIDKLSVSPPFLSLTRSGPIRDELETIPHKIPTSYPTSNRDMGVIVRNYFKYQCRLIEKGKYRSHYSQLWLFSDVLSIDFIGPFSISTTLLQILYKPFLSGKDKNELRELANLSSLLRSGEGWEDIHVKFFTKDILLCPEEIRHACKFGIPKDNNKDMSYPPWGRESRGTITTIPVYYTTTPYPKMLEMPPRIQNPLLSGIRLGQLPTGAHYKIRSILHGMGIHYRDFLSCGDGSGGMTAALLRENVHSRGIFNSLLELSGSVMRGASPEPPSALETLGGDKSRCVNGETCWEYPSDLCDPRTWDYFLRLKAGLGLQIDLIVMDMEVRDSSTSLKIETNVRNYVHRILDEQGVLIYKTYGTYICESEKNAVTILGPMFKTVDLVQTEFSSSQTSEVYMVCKGLKKLIDEPNPDWSSINESWKNLYAFQSSEQEFARAKKVSTYFTLTGIPSQFIPDPFVNIETMLQIFGVPTGVSHAAALKSSDRPADLLTISLFYMAIISYYNINHIRVGPIPPNPPSDGIAQNVGIAITGISFWLSLMEKDIPLYQQCLAVIQQSFPIRWEAVSVKGGYKQKWSTRGDGLPKDTRISDSLAPIGNWIRSLELVRNQVRLNPFNEILFNQLCRTVDNHLKWSNLRRNTGMIEWINRRISKEDRSILMLKSDLHEENSWRD</sequence>
<name>L_VSIVA</name>
<keyword id="KW-0002">3D-structure</keyword>
<keyword id="KW-0067">ATP-binding</keyword>
<keyword id="KW-1035">Host cytoplasm</keyword>
<keyword id="KW-0378">Hydrolase</keyword>
<keyword id="KW-0460">Magnesium</keyword>
<keyword id="KW-0479">Metal-binding</keyword>
<keyword id="KW-0489">Methyltransferase</keyword>
<keyword id="KW-0506">mRNA capping</keyword>
<keyword id="KW-0507">mRNA processing</keyword>
<keyword id="KW-0511">Multifunctional enzyme</keyword>
<keyword id="KW-0547">Nucleotide-binding</keyword>
<keyword id="KW-0548">Nucleotidyltransferase</keyword>
<keyword id="KW-1185">Reference proteome</keyword>
<keyword id="KW-0696">RNA-directed RNA polymerase</keyword>
<keyword id="KW-0949">S-adenosyl-L-methionine</keyword>
<keyword id="KW-0808">Transferase</keyword>
<keyword id="KW-0693">Viral RNA replication</keyword>
<keyword id="KW-1195">Viral transcription</keyword>
<keyword id="KW-0946">Virion</keyword>
<keyword id="KW-0862">Zinc</keyword>